<keyword id="KW-0067">ATP-binding</keyword>
<keyword id="KW-0418">Kinase</keyword>
<keyword id="KW-0547">Nucleotide-binding</keyword>
<keyword id="KW-1185">Reference proteome</keyword>
<keyword id="KW-0723">Serine/threonine-protein kinase</keyword>
<keyword id="KW-0808">Transferase</keyword>
<keyword id="KW-0829">Tyrosine-protein kinase</keyword>
<name>SMOK1_MOUSE</name>
<comment type="function">
    <text evidence="4">May play a role in sperm motility, especially in the regulation of flagellar function.</text>
</comment>
<comment type="catalytic activity">
    <reaction>
        <text>L-seryl-[protein] + ATP = O-phospho-L-seryl-[protein] + ADP + H(+)</text>
        <dbReference type="Rhea" id="RHEA:17989"/>
        <dbReference type="Rhea" id="RHEA-COMP:9863"/>
        <dbReference type="Rhea" id="RHEA-COMP:11604"/>
        <dbReference type="ChEBI" id="CHEBI:15378"/>
        <dbReference type="ChEBI" id="CHEBI:29999"/>
        <dbReference type="ChEBI" id="CHEBI:30616"/>
        <dbReference type="ChEBI" id="CHEBI:83421"/>
        <dbReference type="ChEBI" id="CHEBI:456216"/>
        <dbReference type="EC" id="2.7.11.1"/>
    </reaction>
</comment>
<comment type="catalytic activity">
    <reaction>
        <text>L-threonyl-[protein] + ATP = O-phospho-L-threonyl-[protein] + ADP + H(+)</text>
        <dbReference type="Rhea" id="RHEA:46608"/>
        <dbReference type="Rhea" id="RHEA-COMP:11060"/>
        <dbReference type="Rhea" id="RHEA-COMP:11605"/>
        <dbReference type="ChEBI" id="CHEBI:15378"/>
        <dbReference type="ChEBI" id="CHEBI:30013"/>
        <dbReference type="ChEBI" id="CHEBI:30616"/>
        <dbReference type="ChEBI" id="CHEBI:61977"/>
        <dbReference type="ChEBI" id="CHEBI:456216"/>
        <dbReference type="EC" id="2.7.11.1"/>
    </reaction>
</comment>
<comment type="tissue specificity">
    <text evidence="4">Testis-specific. Expressed in the testis from 22 days postpartum (22 dpp).</text>
</comment>
<comment type="miscellaneous">
    <text>Tw12 allele.</text>
</comment>
<comment type="miscellaneous">
    <text>Encoded on the T-complex, a region of 20-30 Mb on proximal third of mouse chromosome 17. Naturally occurring variant forms of the T-complex, known as complete t-haplotypes, are found in wild mouse populations. The t-haplotypes contain at least four nonoverlapping inversions that suppress recombination with the wild-type chromosome, and lock into strong linkage disequilibrium loci affecting normal transmission of the chromosome, male gametogenesis and embryonic development.</text>
</comment>
<comment type="similarity">
    <text evidence="1">Belongs to the protein kinase superfamily. Tyr protein kinase family. Smok subfamily.</text>
</comment>
<organism>
    <name type="scientific">Mus musculus</name>
    <name type="common">Mouse</name>
    <dbReference type="NCBI Taxonomy" id="10090"/>
    <lineage>
        <taxon>Eukaryota</taxon>
        <taxon>Metazoa</taxon>
        <taxon>Chordata</taxon>
        <taxon>Craniata</taxon>
        <taxon>Vertebrata</taxon>
        <taxon>Euteleostomi</taxon>
        <taxon>Mammalia</taxon>
        <taxon>Eutheria</taxon>
        <taxon>Euarchontoglires</taxon>
        <taxon>Glires</taxon>
        <taxon>Rodentia</taxon>
        <taxon>Myomorpha</taxon>
        <taxon>Muroidea</taxon>
        <taxon>Muridae</taxon>
        <taxon>Murinae</taxon>
        <taxon>Mus</taxon>
        <taxon>Mus</taxon>
    </lineage>
</organism>
<dbReference type="EC" id="2.7.11.1"/>
<dbReference type="EMBL" id="AJ245455">
    <property type="protein sequence ID" value="CAB61343.1"/>
    <property type="molecule type" value="Genomic_DNA"/>
</dbReference>
<dbReference type="SMR" id="Q9QYZ4"/>
<dbReference type="FunCoup" id="Q9QYZ4">
    <property type="interactions" value="112"/>
</dbReference>
<dbReference type="AGR" id="MGI:1351488"/>
<dbReference type="MGI" id="MGI:1351488">
    <property type="gene designation" value="Smok1"/>
</dbReference>
<dbReference type="InParanoid" id="Q9QYZ4"/>
<dbReference type="PRO" id="PR:Q9QYZ4"/>
<dbReference type="Proteomes" id="UP000000589">
    <property type="component" value="Unplaced"/>
</dbReference>
<dbReference type="RNAct" id="Q9QYZ4">
    <property type="molecule type" value="protein"/>
</dbReference>
<dbReference type="GO" id="GO:0005524">
    <property type="term" value="F:ATP binding"/>
    <property type="evidence" value="ECO:0007669"/>
    <property type="project" value="UniProtKB-KW"/>
</dbReference>
<dbReference type="GO" id="GO:0004672">
    <property type="term" value="F:protein kinase activity"/>
    <property type="evidence" value="ECO:0000314"/>
    <property type="project" value="MGI"/>
</dbReference>
<dbReference type="GO" id="GO:0106310">
    <property type="term" value="F:protein serine kinase activity"/>
    <property type="evidence" value="ECO:0007669"/>
    <property type="project" value="RHEA"/>
</dbReference>
<dbReference type="GO" id="GO:0004674">
    <property type="term" value="F:protein serine/threonine kinase activity"/>
    <property type="evidence" value="ECO:0007669"/>
    <property type="project" value="UniProtKB-KW"/>
</dbReference>
<dbReference type="GO" id="GO:0004713">
    <property type="term" value="F:protein tyrosine kinase activity"/>
    <property type="evidence" value="ECO:0007669"/>
    <property type="project" value="UniProtKB-KW"/>
</dbReference>
<dbReference type="CDD" id="cd14003">
    <property type="entry name" value="STKc_AMPK-like"/>
    <property type="match status" value="1"/>
</dbReference>
<dbReference type="CDD" id="cd14337">
    <property type="entry name" value="UBA_MARK_Par1"/>
    <property type="match status" value="1"/>
</dbReference>
<dbReference type="FunFam" id="1.10.510.10:FF:000592">
    <property type="entry name" value="CAMK family protein kinase"/>
    <property type="match status" value="1"/>
</dbReference>
<dbReference type="FunFam" id="1.10.8.10:FF:000005">
    <property type="entry name" value="Non-specific serine/threonine protein kinase"/>
    <property type="match status" value="1"/>
</dbReference>
<dbReference type="FunFam" id="3.30.200.20:FF:000003">
    <property type="entry name" value="Non-specific serine/threonine protein kinase"/>
    <property type="match status" value="1"/>
</dbReference>
<dbReference type="Gene3D" id="1.10.510.10">
    <property type="entry name" value="Transferase(Phosphotransferase) domain 1"/>
    <property type="match status" value="1"/>
</dbReference>
<dbReference type="InterPro" id="IPR011009">
    <property type="entry name" value="Kinase-like_dom_sf"/>
</dbReference>
<dbReference type="InterPro" id="IPR000719">
    <property type="entry name" value="Prot_kinase_dom"/>
</dbReference>
<dbReference type="InterPro" id="IPR008266">
    <property type="entry name" value="Tyr_kinase_AS"/>
</dbReference>
<dbReference type="PANTHER" id="PTHR24346">
    <property type="entry name" value="MAP/MICROTUBULE AFFINITY-REGULATING KINASE"/>
    <property type="match status" value="1"/>
</dbReference>
<dbReference type="PANTHER" id="PTHR24346:SF95">
    <property type="entry name" value="SPERM MOTILITY KINASE 3A"/>
    <property type="match status" value="1"/>
</dbReference>
<dbReference type="Pfam" id="PF00069">
    <property type="entry name" value="Pkinase"/>
    <property type="match status" value="1"/>
</dbReference>
<dbReference type="SUPFAM" id="SSF56112">
    <property type="entry name" value="Protein kinase-like (PK-like)"/>
    <property type="match status" value="1"/>
</dbReference>
<dbReference type="PROSITE" id="PS50011">
    <property type="entry name" value="PROTEIN_KINASE_DOM"/>
    <property type="match status" value="1"/>
</dbReference>
<dbReference type="PROSITE" id="PS00109">
    <property type="entry name" value="PROTEIN_KINASE_TYR"/>
    <property type="match status" value="1"/>
</dbReference>
<proteinExistence type="evidence at transcript level"/>
<sequence length="484" mass="54794">MEKFHAQYEMLETIGQGGCAKVKLARHRLTGTHVAVKMIPKREYWCKLLMFEAELLMMFNHPNIISLLQVIETKKKVYLIMELCEGKSLYQHIQNAGYLQEDEARPLFKQLLSAMNYCHNQGIVHRDLTPDNIMVEKDGRVKNIDFGLSTHVKPGQKLNLFCGTYPFSAPEVLLSRPYGGPKIDVWTLGVVLYFMVIGKIPFDAASIEKLRKQIVAGKYSAPCRLSVKLQHLINLLMTDNPELRPTVAEVMVHPWITKGSGVFPDPCEEQIPLKPDPAIVKPMGHIGFQAQDIEDSLRQRKFNETMASYCLLKKQILKECDRPIRDQPMNPSVTPFPSLVDTPTFHLGLRRRETEPTGLRLSANRQVSVCGKSTSKKRDRSFIWPGVLSRPINTTPTMDQTHTRTRSVPCIYSNVCTIHPNSIDESTEGHTSASAEDKPVHSRGWPRGIKGWTRKIGNAMRKLCCCIPSKETSHLGQSRVCPKK</sequence>
<protein>
    <recommendedName>
        <fullName>Sperm motility kinase 1</fullName>
        <ecNumber>2.7.11.1</ecNumber>
    </recommendedName>
</protein>
<gene>
    <name type="primary">Smok1</name>
</gene>
<feature type="chain" id="PRO_0000307870" description="Sperm motility kinase 1">
    <location>
        <begin position="1"/>
        <end position="484"/>
    </location>
</feature>
<feature type="domain" description="Protein kinase" evidence="1">
    <location>
        <begin position="8"/>
        <end position="256"/>
    </location>
</feature>
<feature type="domain" description="UBA">
    <location>
        <begin position="274"/>
        <end position="314"/>
    </location>
</feature>
<feature type="region of interest" description="Disordered" evidence="3">
    <location>
        <begin position="423"/>
        <end position="447"/>
    </location>
</feature>
<feature type="compositionally biased region" description="Polar residues" evidence="3">
    <location>
        <begin position="423"/>
        <end position="434"/>
    </location>
</feature>
<feature type="active site" description="Proton acceptor" evidence="1 2">
    <location>
        <position position="127"/>
    </location>
</feature>
<feature type="binding site" evidence="1">
    <location>
        <begin position="14"/>
        <end position="22"/>
    </location>
    <ligand>
        <name>ATP</name>
        <dbReference type="ChEBI" id="CHEBI:30616"/>
    </ligand>
</feature>
<feature type="binding site" evidence="1">
    <location>
        <position position="37"/>
    </location>
    <ligand>
        <name>ATP</name>
        <dbReference type="ChEBI" id="CHEBI:30616"/>
    </ligand>
</feature>
<accession>Q9QYZ4</accession>
<evidence type="ECO:0000255" key="1">
    <source>
        <dbReference type="PROSITE-ProRule" id="PRU00159"/>
    </source>
</evidence>
<evidence type="ECO:0000255" key="2">
    <source>
        <dbReference type="PROSITE-ProRule" id="PRU10028"/>
    </source>
</evidence>
<evidence type="ECO:0000256" key="3">
    <source>
        <dbReference type="SAM" id="MobiDB-lite"/>
    </source>
</evidence>
<evidence type="ECO:0000269" key="4">
    <source>
    </source>
</evidence>
<reference key="1">
    <citation type="journal article" date="1999" name="Nature">
        <title>A protein kinase encoded by the t complex responder gene causes non-Mendelian inheritance.</title>
        <authorList>
            <person name="Herrmann B.G."/>
            <person name="Koschorz B."/>
            <person name="Wertz K."/>
            <person name="McLaughlin K.J."/>
            <person name="Kispert A."/>
        </authorList>
    </citation>
    <scope>NUCLEOTIDE SEQUENCE [GENOMIC DNA]</scope>
    <scope>TISSUE SPECIFICITY</scope>
    <scope>FUNCTION</scope>
    <source>
        <tissue>Testis</tissue>
    </source>
</reference>